<evidence type="ECO:0000250" key="1"/>
<evidence type="ECO:0000250" key="2">
    <source>
        <dbReference type="UniProtKB" id="P05452"/>
    </source>
</evidence>
<evidence type="ECO:0000255" key="3">
    <source>
        <dbReference type="PROSITE-ProRule" id="PRU00040"/>
    </source>
</evidence>
<evidence type="ECO:0000269" key="4">
    <source>
    </source>
</evidence>
<evidence type="ECO:0000269" key="5">
    <source>
    </source>
</evidence>
<evidence type="ECO:0000269" key="6">
    <source>
    </source>
</evidence>
<evidence type="ECO:0000305" key="7"/>
<sequence length="202" mass="22257">MGFWGTYLLFCLFSFLSQLTAESPTPKAKKAANAKKDLVSSKMFEELKNRMDVLAQEVALLKEKQALQTVCLKGTKVNLKCLLAFTQPKTFHEASEDCISQGGTLGTPQSELENEALFEYARHSVGNDANIWLGLNDMAAEGAWVDMTGGLLAYKNWETEITTQPDGGKAENCAALSGAANGKWFDKRCRDQLPYICQFAIV</sequence>
<organism>
    <name type="scientific">Mus musculus</name>
    <name type="common">Mouse</name>
    <dbReference type="NCBI Taxonomy" id="10090"/>
    <lineage>
        <taxon>Eukaryota</taxon>
        <taxon>Metazoa</taxon>
        <taxon>Chordata</taxon>
        <taxon>Craniata</taxon>
        <taxon>Vertebrata</taxon>
        <taxon>Euteleostomi</taxon>
        <taxon>Mammalia</taxon>
        <taxon>Eutheria</taxon>
        <taxon>Euarchontoglires</taxon>
        <taxon>Glires</taxon>
        <taxon>Rodentia</taxon>
        <taxon>Myomorpha</taxon>
        <taxon>Muroidea</taxon>
        <taxon>Muridae</taxon>
        <taxon>Murinae</taxon>
        <taxon>Mus</taxon>
        <taxon>Mus</taxon>
    </lineage>
</organism>
<comment type="function">
    <text evidence="1 2">Tetranectin binds to plasminogen and to isolated kringle 4. May be involved in the packaging of molecules destined for exocytosis (By similarity). Plays a role in retinal function (By similarity).</text>
</comment>
<comment type="subunit">
    <text evidence="1">Homotrimer.</text>
</comment>
<comment type="subcellular location">
    <subcellularLocation>
        <location>Secreted</location>
    </subcellularLocation>
</comment>
<comment type="tissue specificity">
    <text evidence="4 5 6">Highest expression in lung, skeletal muscle and heart (PubMed:7835708, PubMed:8563165). Expressed in retina (PubMed:35331648).</text>
</comment>
<comment type="developmental stage">
    <text evidence="4">Highly expressed in the developing retina, at least since 13.5 dpc. Expression decreases afterwards and peaks again at postnatal day 14, and remains constantly expressed in the retina until adulthood.</text>
</comment>
<proteinExistence type="evidence at protein level"/>
<name>TETN_MOUSE</name>
<keyword id="KW-0903">Direct protein sequencing</keyword>
<keyword id="KW-1015">Disulfide bond</keyword>
<keyword id="KW-0430">Lectin</keyword>
<keyword id="KW-1185">Reference proteome</keyword>
<keyword id="KW-0964">Secreted</keyword>
<keyword id="KW-0732">Signal</keyword>
<gene>
    <name type="primary">Clec3b</name>
    <name type="synonym">Tna</name>
</gene>
<reference key="1">
    <citation type="journal article" date="1995" name="Gene">
        <title>Cloning of a cDNA encoding murine tetranectin.</title>
        <authorList>
            <person name="Soerensen C.B."/>
            <person name="Berglund L."/>
            <person name="Petersen T.E."/>
        </authorList>
    </citation>
    <scope>NUCLEOTIDE SEQUENCE [MRNA]</scope>
    <source>
        <strain>C57BL/6 X CBA</strain>
        <tissue>Lung</tissue>
    </source>
</reference>
<reference key="2">
    <citation type="journal article" date="1995" name="Mamm. Genome">
        <title>Mouse tetranectin: cDNA sequence, tissue-specific expression, and chromosomal mapping.</title>
        <authorList>
            <person name="Ibaraki K."/>
            <person name="Kozak C.A."/>
            <person name="Wewer U.M."/>
            <person name="Albrechtsen R."/>
            <person name="Young M.F."/>
        </authorList>
    </citation>
    <scope>NUCLEOTIDE SEQUENCE [MRNA]</scope>
    <scope>TISSUE SPECIFICITY</scope>
    <source>
        <strain>BALB/cJ</strain>
    </source>
</reference>
<reference key="3">
    <citation type="journal article" date="1997" name="Gene">
        <title>Cloning of the murine tetranectin gene and 5'-flanking region.</title>
        <authorList>
            <person name="Soerensen C.B."/>
            <person name="Berglund L."/>
            <person name="Petersen T.E."/>
        </authorList>
    </citation>
    <scope>NUCLEOTIDE SEQUENCE [GENOMIC DNA]</scope>
    <source>
        <strain>BALB/cJ</strain>
        <tissue>Liver</tissue>
    </source>
</reference>
<reference key="4">
    <citation type="submission" date="2009-01" db="UniProtKB">
        <authorList>
            <person name="Lubec G."/>
            <person name="Sunyer B."/>
            <person name="Chen W.-Q."/>
        </authorList>
    </citation>
    <scope>PROTEIN SEQUENCE OF 28-35</scope>
    <scope>IDENTIFICATION BY MASS SPECTROMETRY</scope>
    <source>
        <strain>OF1</strain>
        <tissue>Hippocampus</tissue>
    </source>
</reference>
<reference key="5">
    <citation type="journal article" date="2010" name="Cell">
        <title>A tissue-specific atlas of mouse protein phosphorylation and expression.</title>
        <authorList>
            <person name="Huttlin E.L."/>
            <person name="Jedrychowski M.P."/>
            <person name="Elias J.E."/>
            <person name="Goswami T."/>
            <person name="Rad R."/>
            <person name="Beausoleil S.A."/>
            <person name="Villen J."/>
            <person name="Haas W."/>
            <person name="Sowa M.E."/>
            <person name="Gygi S.P."/>
        </authorList>
    </citation>
    <scope>IDENTIFICATION BY MASS SPECTROMETRY [LARGE SCALE ANALYSIS]</scope>
    <source>
        <tissue>Brown adipose tissue</tissue>
        <tissue>Heart</tissue>
        <tissue>Kidney</tissue>
        <tissue>Liver</tissue>
        <tissue>Lung</tissue>
        <tissue>Pancreas</tissue>
        <tissue>Spleen</tissue>
        <tissue>Testis</tissue>
    </source>
</reference>
<reference key="6">
    <citation type="journal article" date="2022" name="Genet. Med.">
        <title>CLEC3B is a novel causative gene for macular-retinal dystrophy.</title>
        <authorList>
            <person name="Zhou R."/>
            <person name="Mawatari G."/>
            <person name="Cai X.B."/>
            <person name="Shen R.J."/>
            <person name="Wang Y.H."/>
            <person name="Wang Y.T."/>
            <person name="Guo Y.M."/>
            <person name="Guo F.Y."/>
            <person name="Yuan J."/>
            <person name="Pan D."/>
            <person name="Nao-I N."/>
            <person name="Jin Z.B."/>
        </authorList>
    </citation>
    <scope>TISSUE SPECIFICITY</scope>
    <scope>DEVELOPMENTAL STAGE</scope>
</reference>
<accession>P43025</accession>
<feature type="signal peptide" evidence="1">
    <location>
        <begin position="1"/>
        <end position="21"/>
    </location>
</feature>
<feature type="chain" id="PRO_0000017472" description="Tetranectin">
    <location>
        <begin position="22"/>
        <end position="202"/>
    </location>
</feature>
<feature type="domain" description="C-type lectin" evidence="3">
    <location>
        <begin position="77"/>
        <end position="198"/>
    </location>
</feature>
<feature type="disulfide bond" evidence="3">
    <location>
        <begin position="71"/>
        <end position="81"/>
    </location>
</feature>
<feature type="disulfide bond" evidence="3">
    <location>
        <begin position="98"/>
        <end position="197"/>
    </location>
</feature>
<feature type="disulfide bond" evidence="3">
    <location>
        <begin position="173"/>
        <end position="189"/>
    </location>
</feature>
<feature type="sequence conflict" description="In Ref. 2; AAA96811." evidence="7" ref="2">
    <original>LT</original>
    <variation>VI</variation>
    <location>
        <begin position="19"/>
        <end position="20"/>
    </location>
</feature>
<feature type="sequence conflict" description="In Ref. 2; AAA96811." evidence="7" ref="2">
    <original>A</original>
    <variation>T</variation>
    <location>
        <position position="84"/>
    </location>
</feature>
<feature type="sequence conflict" description="In Ref. 2; AAA96811." evidence="7" ref="2">
    <original>A</original>
    <variation>R</variation>
    <location>
        <position position="180"/>
    </location>
</feature>
<feature type="sequence conflict" description="In Ref. 2; AAA96811." evidence="7" ref="2">
    <original>R</original>
    <variation>Q</variation>
    <location>
        <position position="188"/>
    </location>
</feature>
<dbReference type="EMBL" id="X79199">
    <property type="protein sequence ID" value="CAA55791.1"/>
    <property type="molecule type" value="mRNA"/>
</dbReference>
<dbReference type="EMBL" id="U08595">
    <property type="protein sequence ID" value="AAA96811.1"/>
    <property type="molecule type" value="mRNA"/>
</dbReference>
<dbReference type="EMBL" id="X98122">
    <property type="protein sequence ID" value="CAA66804.1"/>
    <property type="molecule type" value="Genomic_DNA"/>
</dbReference>
<dbReference type="CCDS" id="CCDS23656.1"/>
<dbReference type="PIR" id="JC4031">
    <property type="entry name" value="JC4031"/>
</dbReference>
<dbReference type="SMR" id="P43025"/>
<dbReference type="FunCoup" id="P43025">
    <property type="interactions" value="120"/>
</dbReference>
<dbReference type="STRING" id="10090.ENSMUSP00000026890"/>
<dbReference type="SwissPalm" id="P43025"/>
<dbReference type="jPOST" id="P43025"/>
<dbReference type="PaxDb" id="10090-ENSMUSP00000026890"/>
<dbReference type="PeptideAtlas" id="P43025"/>
<dbReference type="ProteomicsDB" id="259003"/>
<dbReference type="AGR" id="MGI:104540"/>
<dbReference type="MGI" id="MGI:104540">
    <property type="gene designation" value="Clec3b"/>
</dbReference>
<dbReference type="eggNOG" id="KOG4297">
    <property type="taxonomic scope" value="Eukaryota"/>
</dbReference>
<dbReference type="InParanoid" id="P43025"/>
<dbReference type="PhylomeDB" id="P43025"/>
<dbReference type="Reactome" id="R-MMU-114608">
    <property type="pathway name" value="Platelet degranulation"/>
</dbReference>
<dbReference type="ChiTaRS" id="Clec3b">
    <property type="organism name" value="mouse"/>
</dbReference>
<dbReference type="PRO" id="PR:P43025"/>
<dbReference type="Proteomes" id="UP000000589">
    <property type="component" value="Unplaced"/>
</dbReference>
<dbReference type="RNAct" id="P43025">
    <property type="molecule type" value="protein"/>
</dbReference>
<dbReference type="GO" id="GO:0005737">
    <property type="term" value="C:cytoplasm"/>
    <property type="evidence" value="ECO:0000314"/>
    <property type="project" value="UniProtKB"/>
</dbReference>
<dbReference type="GO" id="GO:0031012">
    <property type="term" value="C:extracellular matrix"/>
    <property type="evidence" value="ECO:0000304"/>
    <property type="project" value="MGI"/>
</dbReference>
<dbReference type="GO" id="GO:0005615">
    <property type="term" value="C:extracellular space"/>
    <property type="evidence" value="ECO:0000250"/>
    <property type="project" value="UniProtKB"/>
</dbReference>
<dbReference type="GO" id="GO:0001652">
    <property type="term" value="C:granular component"/>
    <property type="evidence" value="ECO:0000250"/>
    <property type="project" value="UniProtKB"/>
</dbReference>
<dbReference type="GO" id="GO:0005509">
    <property type="term" value="F:calcium ion binding"/>
    <property type="evidence" value="ECO:0000250"/>
    <property type="project" value="UniProtKB"/>
</dbReference>
<dbReference type="GO" id="GO:0030246">
    <property type="term" value="F:carbohydrate binding"/>
    <property type="evidence" value="ECO:0000304"/>
    <property type="project" value="MGI"/>
</dbReference>
<dbReference type="GO" id="GO:0008201">
    <property type="term" value="F:heparin binding"/>
    <property type="evidence" value="ECO:0000250"/>
    <property type="project" value="UniProtKB"/>
</dbReference>
<dbReference type="GO" id="GO:0030282">
    <property type="term" value="P:bone mineralization"/>
    <property type="evidence" value="ECO:0000250"/>
    <property type="project" value="UniProtKB"/>
</dbReference>
<dbReference type="GO" id="GO:0001503">
    <property type="term" value="P:ossification"/>
    <property type="evidence" value="ECO:0000270"/>
    <property type="project" value="UniProtKB"/>
</dbReference>
<dbReference type="GO" id="GO:0010756">
    <property type="term" value="P:positive regulation of plasminogen activation"/>
    <property type="evidence" value="ECO:0000314"/>
    <property type="project" value="UniProtKB"/>
</dbReference>
<dbReference type="GO" id="GO:0001501">
    <property type="term" value="P:skeletal system development"/>
    <property type="evidence" value="ECO:0000315"/>
    <property type="project" value="MGI"/>
</dbReference>
<dbReference type="CDD" id="cd03596">
    <property type="entry name" value="CLECT_tetranectin_like"/>
    <property type="match status" value="1"/>
</dbReference>
<dbReference type="FunFam" id="3.10.100.10:FF:000010">
    <property type="entry name" value="C-type lectin domain family 3 member A"/>
    <property type="match status" value="1"/>
</dbReference>
<dbReference type="Gene3D" id="3.10.100.10">
    <property type="entry name" value="Mannose-Binding Protein A, subunit A"/>
    <property type="match status" value="1"/>
</dbReference>
<dbReference type="InterPro" id="IPR001304">
    <property type="entry name" value="C-type_lectin-like"/>
</dbReference>
<dbReference type="InterPro" id="IPR016186">
    <property type="entry name" value="C-type_lectin-like/link_sf"/>
</dbReference>
<dbReference type="InterPro" id="IPR018378">
    <property type="entry name" value="C-type_lectin_CS"/>
</dbReference>
<dbReference type="InterPro" id="IPR051663">
    <property type="entry name" value="CLec_Tetranectin-domain"/>
</dbReference>
<dbReference type="InterPro" id="IPR016187">
    <property type="entry name" value="CTDL_fold"/>
</dbReference>
<dbReference type="PANTHER" id="PTHR22799:SF3">
    <property type="entry name" value="TETRANECTIN"/>
    <property type="match status" value="1"/>
</dbReference>
<dbReference type="PANTHER" id="PTHR22799">
    <property type="entry name" value="TETRANECTIN-RELATED"/>
    <property type="match status" value="1"/>
</dbReference>
<dbReference type="Pfam" id="PF00059">
    <property type="entry name" value="Lectin_C"/>
    <property type="match status" value="1"/>
</dbReference>
<dbReference type="PRINTS" id="PR01504">
    <property type="entry name" value="PNCREATITSAP"/>
</dbReference>
<dbReference type="SMART" id="SM00034">
    <property type="entry name" value="CLECT"/>
    <property type="match status" value="1"/>
</dbReference>
<dbReference type="SUPFAM" id="SSF56436">
    <property type="entry name" value="C-type lectin-like"/>
    <property type="match status" value="1"/>
</dbReference>
<dbReference type="SUPFAM" id="SSF57944">
    <property type="entry name" value="Triple coiled coil domain of C-type lectins"/>
    <property type="match status" value="1"/>
</dbReference>
<dbReference type="PROSITE" id="PS00615">
    <property type="entry name" value="C_TYPE_LECTIN_1"/>
    <property type="match status" value="1"/>
</dbReference>
<dbReference type="PROSITE" id="PS50041">
    <property type="entry name" value="C_TYPE_LECTIN_2"/>
    <property type="match status" value="1"/>
</dbReference>
<protein>
    <recommendedName>
        <fullName>Tetranectin</fullName>
        <shortName>TN</shortName>
    </recommendedName>
    <alternativeName>
        <fullName>C-type lectin domain family 3 member B</fullName>
    </alternativeName>
    <alternativeName>
        <fullName>Plasminogen kringle 4-binding protein</fullName>
    </alternativeName>
</protein>